<organism>
    <name type="scientific">Tamias townsendii</name>
    <name type="common">Townsend's chipmunk</name>
    <name type="synonym">Neotamias townsendii</name>
    <dbReference type="NCBI Taxonomy" id="123796"/>
    <lineage>
        <taxon>Eukaryota</taxon>
        <taxon>Metazoa</taxon>
        <taxon>Chordata</taxon>
        <taxon>Craniata</taxon>
        <taxon>Vertebrata</taxon>
        <taxon>Euteleostomi</taxon>
        <taxon>Mammalia</taxon>
        <taxon>Eutheria</taxon>
        <taxon>Euarchontoglires</taxon>
        <taxon>Glires</taxon>
        <taxon>Rodentia</taxon>
        <taxon>Sciuromorpha</taxon>
        <taxon>Sciuridae</taxon>
        <taxon>Xerinae</taxon>
        <taxon>Marmotini</taxon>
        <taxon>Tamias</taxon>
    </lineage>
</organism>
<dbReference type="EC" id="7.1.1.9"/>
<dbReference type="EMBL" id="AF147625">
    <property type="protein sequence ID" value="AAG42618.1"/>
    <property type="molecule type" value="Genomic_DNA"/>
</dbReference>
<dbReference type="EMBL" id="AF147626">
    <property type="protein sequence ID" value="AAG42619.1"/>
    <property type="molecule type" value="Genomic_DNA"/>
</dbReference>
<dbReference type="EMBL" id="AF147627">
    <property type="protein sequence ID" value="AAG42620.1"/>
    <property type="molecule type" value="Genomic_DNA"/>
</dbReference>
<dbReference type="SMR" id="Q9G185"/>
<dbReference type="GO" id="GO:0005743">
    <property type="term" value="C:mitochondrial inner membrane"/>
    <property type="evidence" value="ECO:0007669"/>
    <property type="project" value="UniProtKB-SubCell"/>
</dbReference>
<dbReference type="GO" id="GO:0045277">
    <property type="term" value="C:respiratory chain complex IV"/>
    <property type="evidence" value="ECO:0000250"/>
    <property type="project" value="UniProtKB"/>
</dbReference>
<dbReference type="GO" id="GO:0005507">
    <property type="term" value="F:copper ion binding"/>
    <property type="evidence" value="ECO:0007669"/>
    <property type="project" value="InterPro"/>
</dbReference>
<dbReference type="GO" id="GO:0004129">
    <property type="term" value="F:cytochrome-c oxidase activity"/>
    <property type="evidence" value="ECO:0007669"/>
    <property type="project" value="UniProtKB-EC"/>
</dbReference>
<dbReference type="GO" id="GO:0042773">
    <property type="term" value="P:ATP synthesis coupled electron transport"/>
    <property type="evidence" value="ECO:0007669"/>
    <property type="project" value="TreeGrafter"/>
</dbReference>
<dbReference type="CDD" id="cd13912">
    <property type="entry name" value="CcO_II_C"/>
    <property type="match status" value="1"/>
</dbReference>
<dbReference type="FunFam" id="1.10.287.90:FF:000001">
    <property type="entry name" value="Cytochrome c oxidase subunit 2"/>
    <property type="match status" value="1"/>
</dbReference>
<dbReference type="FunFam" id="2.60.40.420:FF:000001">
    <property type="entry name" value="Cytochrome c oxidase subunit 2"/>
    <property type="match status" value="1"/>
</dbReference>
<dbReference type="Gene3D" id="1.10.287.90">
    <property type="match status" value="1"/>
</dbReference>
<dbReference type="Gene3D" id="2.60.40.420">
    <property type="entry name" value="Cupredoxins - blue copper proteins"/>
    <property type="match status" value="1"/>
</dbReference>
<dbReference type="InterPro" id="IPR045187">
    <property type="entry name" value="CcO_II"/>
</dbReference>
<dbReference type="InterPro" id="IPR002429">
    <property type="entry name" value="CcO_II-like_C"/>
</dbReference>
<dbReference type="InterPro" id="IPR034210">
    <property type="entry name" value="CcO_II_C"/>
</dbReference>
<dbReference type="InterPro" id="IPR001505">
    <property type="entry name" value="Copper_CuA"/>
</dbReference>
<dbReference type="InterPro" id="IPR008972">
    <property type="entry name" value="Cupredoxin"/>
</dbReference>
<dbReference type="InterPro" id="IPR014222">
    <property type="entry name" value="Cyt_c_oxidase_su2"/>
</dbReference>
<dbReference type="InterPro" id="IPR011759">
    <property type="entry name" value="Cyt_c_oxidase_su2_TM_dom"/>
</dbReference>
<dbReference type="InterPro" id="IPR036257">
    <property type="entry name" value="Cyt_c_oxidase_su2_TM_sf"/>
</dbReference>
<dbReference type="NCBIfam" id="TIGR02866">
    <property type="entry name" value="CoxB"/>
    <property type="match status" value="1"/>
</dbReference>
<dbReference type="PANTHER" id="PTHR22888:SF9">
    <property type="entry name" value="CYTOCHROME C OXIDASE SUBUNIT 2"/>
    <property type="match status" value="1"/>
</dbReference>
<dbReference type="PANTHER" id="PTHR22888">
    <property type="entry name" value="CYTOCHROME C OXIDASE, SUBUNIT II"/>
    <property type="match status" value="1"/>
</dbReference>
<dbReference type="Pfam" id="PF00116">
    <property type="entry name" value="COX2"/>
    <property type="match status" value="1"/>
</dbReference>
<dbReference type="Pfam" id="PF02790">
    <property type="entry name" value="COX2_TM"/>
    <property type="match status" value="1"/>
</dbReference>
<dbReference type="PRINTS" id="PR01166">
    <property type="entry name" value="CYCOXIDASEII"/>
</dbReference>
<dbReference type="SUPFAM" id="SSF49503">
    <property type="entry name" value="Cupredoxins"/>
    <property type="match status" value="1"/>
</dbReference>
<dbReference type="SUPFAM" id="SSF81464">
    <property type="entry name" value="Cytochrome c oxidase subunit II-like, transmembrane region"/>
    <property type="match status" value="1"/>
</dbReference>
<dbReference type="PROSITE" id="PS00078">
    <property type="entry name" value="COX2"/>
    <property type="match status" value="1"/>
</dbReference>
<dbReference type="PROSITE" id="PS50857">
    <property type="entry name" value="COX2_CUA"/>
    <property type="match status" value="1"/>
</dbReference>
<dbReference type="PROSITE" id="PS50999">
    <property type="entry name" value="COX2_TM"/>
    <property type="match status" value="1"/>
</dbReference>
<name>COX2_TAMTO</name>
<reference key="1">
    <citation type="journal article" date="2000" name="J. Mammal. Evol.">
        <title>Molecular phylogeny of the chipmunk genus Tamias based on the mitochondrial cytochrome oxidase subunit II gene.</title>
        <authorList>
            <person name="Piaggio A.J."/>
            <person name="Spicer G.S."/>
        </authorList>
    </citation>
    <scope>NUCLEOTIDE SEQUENCE [GENOMIC DNA]</scope>
    <source>
        <strain>Isolate MSB 43429/NK 3136</strain>
        <strain>Isolate MSB 43546/NK 3252</strain>
        <strain>Isolate MSB 53282/NK 7980</strain>
    </source>
</reference>
<comment type="function">
    <text evidence="2">Component of the cytochrome c oxidase, the last enzyme in the mitochondrial electron transport chain which drives oxidative phosphorylation. The respiratory chain contains 3 multisubunit complexes succinate dehydrogenase (complex II, CII), ubiquinol-cytochrome c oxidoreductase (cytochrome b-c1 complex, complex III, CIII) and cytochrome c oxidase (complex IV, CIV), that cooperate to transfer electrons derived from NADH and succinate to molecular oxygen, creating an electrochemical gradient over the inner membrane that drives transmembrane transport and the ATP synthase. Cytochrome c oxidase is the component of the respiratory chain that catalyzes the reduction of oxygen to water. Electrons originating from reduced cytochrome c in the intermembrane space (IMS) are transferred via the dinuclear copper A center (CU(A)) of subunit 2 and heme A of subunit 1 to the active site in subunit 1, a binuclear center (BNC) formed by heme A3 and copper B (CU(B)). The BNC reduces molecular oxygen to 2 water molecules using 4 electrons from cytochrome c in the IMS and 4 protons from the mitochondrial matrix.</text>
</comment>
<comment type="catalytic activity">
    <reaction evidence="2">
        <text>4 Fe(II)-[cytochrome c] + O2 + 8 H(+)(in) = 4 Fe(III)-[cytochrome c] + 2 H2O + 4 H(+)(out)</text>
        <dbReference type="Rhea" id="RHEA:11436"/>
        <dbReference type="Rhea" id="RHEA-COMP:10350"/>
        <dbReference type="Rhea" id="RHEA-COMP:14399"/>
        <dbReference type="ChEBI" id="CHEBI:15377"/>
        <dbReference type="ChEBI" id="CHEBI:15378"/>
        <dbReference type="ChEBI" id="CHEBI:15379"/>
        <dbReference type="ChEBI" id="CHEBI:29033"/>
        <dbReference type="ChEBI" id="CHEBI:29034"/>
        <dbReference type="EC" id="7.1.1.9"/>
    </reaction>
    <physiologicalReaction direction="left-to-right" evidence="2">
        <dbReference type="Rhea" id="RHEA:11437"/>
    </physiologicalReaction>
</comment>
<comment type="cofactor">
    <cofactor evidence="3">
        <name>Cu cation</name>
        <dbReference type="ChEBI" id="CHEBI:23378"/>
    </cofactor>
    <text evidence="3">Binds a dinuclear copper A center per subunit.</text>
</comment>
<comment type="subunit">
    <text evidence="1 3">Component of the cytochrome c oxidase (complex IV, CIV), a multisubunit enzyme composed of 14 subunits. The complex is composed of a catalytic core of 3 subunits MT-CO1, MT-CO2 and MT-CO3, encoded in the mitochondrial DNA, and 11 supernumerary subunits COX4I, COX5A, COX5B, COX6A, COX6B, COX6C, COX7A, COX7B, COX7C, COX8 and NDUFA4, which are encoded in the nuclear genome. The complex exists as a monomer or a dimer and forms supercomplexes (SCs) in the inner mitochondrial membrane with NADH-ubiquinone oxidoreductase (complex I, CI) and ubiquinol-cytochrome c oxidoreductase (cytochrome b-c1 complex, complex III, CIII), resulting in different assemblies (supercomplex SCI(1)III(2)IV(1) and megacomplex MCI(2)III(2)IV(2)) (By similarity). Found in a complex with TMEM177, COA6, COX18, COX20, SCO1 and SCO2. Interacts with TMEM177 in a COX20-dependent manner. Interacts with COX20. Interacts with COX16 (By similarity).</text>
</comment>
<comment type="subcellular location">
    <subcellularLocation>
        <location evidence="3">Mitochondrion inner membrane</location>
        <topology evidence="3">Multi-pass membrane protein</topology>
    </subcellularLocation>
</comment>
<comment type="similarity">
    <text evidence="4">Belongs to the cytochrome c oxidase subunit 2 family.</text>
</comment>
<evidence type="ECO:0000250" key="1">
    <source>
        <dbReference type="UniProtKB" id="P00403"/>
    </source>
</evidence>
<evidence type="ECO:0000250" key="2">
    <source>
        <dbReference type="UniProtKB" id="P00410"/>
    </source>
</evidence>
<evidence type="ECO:0000250" key="3">
    <source>
        <dbReference type="UniProtKB" id="P68530"/>
    </source>
</evidence>
<evidence type="ECO:0000305" key="4"/>
<gene>
    <name type="primary">MT-CO2</name>
    <name type="synonym">COII</name>
    <name type="synonym">COX2</name>
    <name type="synonym">COXII</name>
    <name type="synonym">MTCO2</name>
</gene>
<proteinExistence type="inferred from homology"/>
<protein>
    <recommendedName>
        <fullName>Cytochrome c oxidase subunit 2</fullName>
        <ecNumber>7.1.1.9</ecNumber>
    </recommendedName>
    <alternativeName>
        <fullName>Cytochrome c oxidase polypeptide II</fullName>
    </alternativeName>
</protein>
<feature type="chain" id="PRO_0000257861" description="Cytochrome c oxidase subunit 2">
    <location>
        <begin position="1"/>
        <end position="227"/>
    </location>
</feature>
<feature type="topological domain" description="Mitochondrial intermembrane" evidence="3">
    <location>
        <begin position="1"/>
        <end position="14"/>
    </location>
</feature>
<feature type="transmembrane region" description="Helical; Name=I" evidence="3">
    <location>
        <begin position="15"/>
        <end position="45"/>
    </location>
</feature>
<feature type="topological domain" description="Mitochondrial matrix" evidence="3">
    <location>
        <begin position="46"/>
        <end position="59"/>
    </location>
</feature>
<feature type="transmembrane region" description="Helical; Name=II" evidence="3">
    <location>
        <begin position="60"/>
        <end position="87"/>
    </location>
</feature>
<feature type="topological domain" description="Mitochondrial intermembrane" evidence="3">
    <location>
        <begin position="88"/>
        <end position="227"/>
    </location>
</feature>
<feature type="binding site" evidence="3">
    <location>
        <position position="161"/>
    </location>
    <ligand>
        <name>Cu cation</name>
        <dbReference type="ChEBI" id="CHEBI:23378"/>
        <label>A1</label>
    </ligand>
</feature>
<feature type="binding site" evidence="3">
    <location>
        <position position="196"/>
    </location>
    <ligand>
        <name>Cu cation</name>
        <dbReference type="ChEBI" id="CHEBI:23378"/>
        <label>A1</label>
    </ligand>
</feature>
<feature type="binding site" evidence="3">
    <location>
        <position position="196"/>
    </location>
    <ligand>
        <name>Cu cation</name>
        <dbReference type="ChEBI" id="CHEBI:23378"/>
        <label>A2</label>
    </ligand>
</feature>
<feature type="binding site" evidence="3">
    <location>
        <position position="198"/>
    </location>
    <ligand>
        <name>Cu cation</name>
        <dbReference type="ChEBI" id="CHEBI:23378"/>
        <label>A2</label>
    </ligand>
</feature>
<feature type="binding site" evidence="3">
    <location>
        <position position="198"/>
    </location>
    <ligand>
        <name>Mg(2+)</name>
        <dbReference type="ChEBI" id="CHEBI:18420"/>
        <note>ligand shared with MT-CO1</note>
    </ligand>
</feature>
<feature type="binding site" evidence="3">
    <location>
        <position position="200"/>
    </location>
    <ligand>
        <name>Cu cation</name>
        <dbReference type="ChEBI" id="CHEBI:23378"/>
        <label>A1</label>
    </ligand>
</feature>
<feature type="binding site" evidence="3">
    <location>
        <position position="200"/>
    </location>
    <ligand>
        <name>Cu cation</name>
        <dbReference type="ChEBI" id="CHEBI:23378"/>
        <label>A2</label>
    </ligand>
</feature>
<feature type="binding site" evidence="3">
    <location>
        <position position="204"/>
    </location>
    <ligand>
        <name>Cu cation</name>
        <dbReference type="ChEBI" id="CHEBI:23378"/>
        <label>A2</label>
    </ligand>
</feature>
<feature type="binding site" evidence="3">
    <location>
        <position position="207"/>
    </location>
    <ligand>
        <name>Cu cation</name>
        <dbReference type="ChEBI" id="CHEBI:23378"/>
        <label>A1</label>
    </ligand>
</feature>
<feature type="sequence variant" description="In strain: Isolate MSB 53282/NK 7980.">
    <original>I</original>
    <variation>V</variation>
    <location>
        <position position="61"/>
    </location>
</feature>
<feature type="sequence variant" description="In strain: Isolate MSB 53282/NK 7980.">
    <original>I</original>
    <variation>V</variation>
    <location>
        <position position="123"/>
    </location>
</feature>
<accession>Q9G185</accession>
<accession>Q9G5S3</accession>
<sequence>MAYPFELGFQDATSPIMEELLHFHDHTLMIVFLISSLVLYIISLMLTTKLTHTSTMDAQEIETIWTILPAIILILIALPSLRILYMMDEINDPSLTVKTMGHQWYWSYEYTDYEDLNFDSYMIPTSDLNPGELRLLEVDNRVVLPMELPIRMLISSEDVLHSWAVPSLGLKTDAIPGRLNQATLTSTRPGLYYGQCSEICGSNHSFMPIVLELVPLKHFENWSSSML</sequence>
<geneLocation type="mitochondrion"/>
<keyword id="KW-0186">Copper</keyword>
<keyword id="KW-0249">Electron transport</keyword>
<keyword id="KW-0460">Magnesium</keyword>
<keyword id="KW-0472">Membrane</keyword>
<keyword id="KW-0479">Metal-binding</keyword>
<keyword id="KW-0496">Mitochondrion</keyword>
<keyword id="KW-0999">Mitochondrion inner membrane</keyword>
<keyword id="KW-0679">Respiratory chain</keyword>
<keyword id="KW-1278">Translocase</keyword>
<keyword id="KW-0812">Transmembrane</keyword>
<keyword id="KW-1133">Transmembrane helix</keyword>
<keyword id="KW-0813">Transport</keyword>